<name>CO8G_RABIT</name>
<keyword id="KW-0179">Complement alternate pathway</keyword>
<keyword id="KW-0180">Complement pathway</keyword>
<keyword id="KW-0204">Cytolysis</keyword>
<keyword id="KW-1015">Disulfide bond</keyword>
<keyword id="KW-0325">Glycoprotein</keyword>
<keyword id="KW-0391">Immunity</keyword>
<keyword id="KW-0399">Innate immunity</keyword>
<keyword id="KW-0472">Membrane</keyword>
<keyword id="KW-0473">Membrane attack complex</keyword>
<keyword id="KW-1185">Reference proteome</keyword>
<keyword id="KW-0683">Retinol-binding</keyword>
<keyword id="KW-0964">Secreted</keyword>
<keyword id="KW-0732">Signal</keyword>
<keyword id="KW-1052">Target cell membrane</keyword>
<keyword id="KW-1053">Target membrane</keyword>
<protein>
    <recommendedName>
        <fullName>Complement component C8 gamma chain</fullName>
    </recommendedName>
</protein>
<reference key="1">
    <citation type="journal article" date="1994" name="J. Immunol.">
        <title>Characterization of rabbit complement component C8. Functional evidence for the species-selective recognition of C8 alpha by homologous restriction factor (CD59).</title>
        <authorList>
            <person name="White R.V."/>
            <person name="Kaufman K.M."/>
            <person name="Letson C.S."/>
            <person name="Platteborze P.L."/>
            <person name="Sodetz J.M."/>
        </authorList>
    </citation>
    <scope>NUCLEOTIDE SEQUENCE [MRNA]</scope>
    <source>
        <strain>New Zealand white</strain>
        <tissue>Liver</tissue>
    </source>
</reference>
<evidence type="ECO:0000250" key="1">
    <source>
        <dbReference type="UniProtKB" id="P07360"/>
    </source>
</evidence>
<evidence type="ECO:0000255" key="2"/>
<evidence type="ECO:0000305" key="3"/>
<feature type="signal peptide" evidence="2">
    <location>
        <begin position="1"/>
        <end position="23"/>
    </location>
</feature>
<feature type="chain" id="PRO_0000017883" description="Complement component C8 gamma chain">
    <location>
        <begin position="24"/>
        <end position="202"/>
    </location>
</feature>
<feature type="glycosylation site" description="N-linked (GlcNAc...) asparagine" evidence="2">
    <location>
        <position position="173"/>
    </location>
</feature>
<feature type="disulfide bond" description="Interchain (with C-194 in C8-alpha chain)" evidence="1">
    <location>
        <position position="60"/>
    </location>
</feature>
<feature type="disulfide bond" evidence="1">
    <location>
        <begin position="96"/>
        <end position="188"/>
    </location>
</feature>
<organism>
    <name type="scientific">Oryctolagus cuniculus</name>
    <name type="common">Rabbit</name>
    <dbReference type="NCBI Taxonomy" id="9986"/>
    <lineage>
        <taxon>Eukaryota</taxon>
        <taxon>Metazoa</taxon>
        <taxon>Chordata</taxon>
        <taxon>Craniata</taxon>
        <taxon>Vertebrata</taxon>
        <taxon>Euteleostomi</taxon>
        <taxon>Mammalia</taxon>
        <taxon>Eutheria</taxon>
        <taxon>Euarchontoglires</taxon>
        <taxon>Glires</taxon>
        <taxon>Lagomorpha</taxon>
        <taxon>Leporidae</taxon>
        <taxon>Oryctolagus</taxon>
    </lineage>
</organism>
<dbReference type="EMBL" id="L26979">
    <property type="protein sequence ID" value="AAA31193.1"/>
    <property type="molecule type" value="mRNA"/>
</dbReference>
<dbReference type="PIR" id="I46688">
    <property type="entry name" value="I46688"/>
</dbReference>
<dbReference type="RefSeq" id="NP_001075723.1">
    <property type="nucleotide sequence ID" value="NM_001082254.1"/>
</dbReference>
<dbReference type="SMR" id="Q28679"/>
<dbReference type="FunCoup" id="Q28679">
    <property type="interactions" value="22"/>
</dbReference>
<dbReference type="GlyCosmos" id="Q28679">
    <property type="glycosylation" value="1 site, No reported glycans"/>
</dbReference>
<dbReference type="GeneID" id="100009075"/>
<dbReference type="CTD" id="733"/>
<dbReference type="InParanoid" id="Q28679"/>
<dbReference type="Proteomes" id="UP000001811">
    <property type="component" value="Unplaced"/>
</dbReference>
<dbReference type="GO" id="GO:0072562">
    <property type="term" value="C:blood microparticle"/>
    <property type="evidence" value="ECO:0007669"/>
    <property type="project" value="TreeGrafter"/>
</dbReference>
<dbReference type="GO" id="GO:0070062">
    <property type="term" value="C:extracellular exosome"/>
    <property type="evidence" value="ECO:0007669"/>
    <property type="project" value="TreeGrafter"/>
</dbReference>
<dbReference type="GO" id="GO:0005579">
    <property type="term" value="C:membrane attack complex"/>
    <property type="evidence" value="ECO:0007669"/>
    <property type="project" value="UniProtKB-KW"/>
</dbReference>
<dbReference type="GO" id="GO:0001848">
    <property type="term" value="F:complement binding"/>
    <property type="evidence" value="ECO:0007669"/>
    <property type="project" value="TreeGrafter"/>
</dbReference>
<dbReference type="GO" id="GO:0019841">
    <property type="term" value="F:retinol binding"/>
    <property type="evidence" value="ECO:0007669"/>
    <property type="project" value="UniProtKB-KW"/>
</dbReference>
<dbReference type="GO" id="GO:0006957">
    <property type="term" value="P:complement activation, alternative pathway"/>
    <property type="evidence" value="ECO:0007669"/>
    <property type="project" value="UniProtKB-KW"/>
</dbReference>
<dbReference type="GO" id="GO:0006958">
    <property type="term" value="P:complement activation, classical pathway"/>
    <property type="evidence" value="ECO:0007669"/>
    <property type="project" value="UniProtKB-KW"/>
</dbReference>
<dbReference type="GO" id="GO:0031640">
    <property type="term" value="P:killing of cells of another organism"/>
    <property type="evidence" value="ECO:0007669"/>
    <property type="project" value="UniProtKB-KW"/>
</dbReference>
<dbReference type="FunFam" id="2.40.128.20:FF:000015">
    <property type="entry name" value="Complement component C8 gamma chain"/>
    <property type="match status" value="1"/>
</dbReference>
<dbReference type="Gene3D" id="2.40.128.20">
    <property type="match status" value="1"/>
</dbReference>
<dbReference type="InterPro" id="IPR002968">
    <property type="entry name" value="A1-microglobln"/>
</dbReference>
<dbReference type="InterPro" id="IPR043245">
    <property type="entry name" value="C8G"/>
</dbReference>
<dbReference type="InterPro" id="IPR012674">
    <property type="entry name" value="Calycin"/>
</dbReference>
<dbReference type="InterPro" id="IPR022272">
    <property type="entry name" value="Lipocalin_CS"/>
</dbReference>
<dbReference type="InterPro" id="IPR000566">
    <property type="entry name" value="Lipocln_cytosolic_FA-bd_dom"/>
</dbReference>
<dbReference type="PANTHER" id="PTHR47304">
    <property type="entry name" value="COMPLEMENT COMPONENT C8 GAMMA CHAIN"/>
    <property type="match status" value="1"/>
</dbReference>
<dbReference type="PANTHER" id="PTHR47304:SF1">
    <property type="entry name" value="COMPLEMENT COMPONENT C8 GAMMA CHAIN"/>
    <property type="match status" value="1"/>
</dbReference>
<dbReference type="Pfam" id="PF00061">
    <property type="entry name" value="Lipocalin"/>
    <property type="match status" value="1"/>
</dbReference>
<dbReference type="PRINTS" id="PR01215">
    <property type="entry name" value="A1MCGLOBULIN"/>
</dbReference>
<dbReference type="SUPFAM" id="SSF50814">
    <property type="entry name" value="Lipocalins"/>
    <property type="match status" value="1"/>
</dbReference>
<dbReference type="PROSITE" id="PS00213">
    <property type="entry name" value="LIPOCALIN"/>
    <property type="match status" value="1"/>
</dbReference>
<gene>
    <name type="primary">C8G</name>
</gene>
<accession>Q28679</accession>
<sequence>MVLRGRAVLLAVLLAAGSLGRWAQKPRGAPSAISAIQPKANFDAQQFAGTWLLAAVGSACHFLQEQGHRAEATALHVAPQGAAMAVSTFRKLDGICWQVSQRYGATGVPGRFLLPARGPRGAVHVVAAETDYHSFAVLYLERARQLSVKLYVRSLPVSDSVLGAFEQRVAQANLTQDQVLFFPTYGFCEAADQFHILDEVRR</sequence>
<comment type="function">
    <text evidence="1">Component of the membrane attack complex (MAC), a multiprotein complex activated by the complement cascade, which inserts into a target cell membrane and forms a pore, leading to target cell membrane rupture and cell lysis. The MAC is initiated by proteolytic cleavage of C5 into complement C5b in response to the classical, alternative, lectin and GZMK complement pathways. The complement pathways consist in a cascade of proteins that leads to phagocytosis and breakdown of pathogens and signaling that strengthens the adaptive immune system. C8G, together with C8A and C8B, inserts into the target membrane, but does not form pores by itself. During MAC assembly, associates with C5b, C6 and C7 to form the C5b8 intermediate complex that inserts into the target membrane and traverses the bilayer increasing membrane rigidity.</text>
</comment>
<comment type="activity regulation">
    <text evidence="1">Membrane attack complex (MAC) assembly is inhibited by CD59, thereby protecting self-cells from damage during complement activation. MAC assembly is also inhibited by clusterin (CLU) chaperones that inhibit polymerization of C9.</text>
</comment>
<comment type="subunit">
    <text evidence="1">Heterotrimer of 3 chains: alpha (C8A), beta (C8B) and gamma (C8G); the alpha and gamma chains are disulfide bonded. Component of the membrane attack complex (MAC), composed of complement C5b, C6, C7, C8A, C8B, C8G and multiple copies of the pore-forming subunit C9.</text>
</comment>
<comment type="subcellular location">
    <subcellularLocation>
        <location evidence="1">Secreted</location>
    </subcellularLocation>
    <subcellularLocation>
        <location evidence="1">Target cell membrane</location>
    </subcellularLocation>
    <text evidence="1">Secreted as soluble protein. Inserts into the cell membrane of target cells.</text>
</comment>
<comment type="similarity">
    <text evidence="3">Belongs to the calycin superfamily. Lipocalin family.</text>
</comment>
<proteinExistence type="evidence at transcript level"/>